<name>ACPM3_ARATH</name>
<dbReference type="EMBL" id="AB025628">
    <property type="protein sequence ID" value="BAB09089.1"/>
    <property type="molecule type" value="Genomic_DNA"/>
</dbReference>
<dbReference type="EMBL" id="CP002688">
    <property type="protein sequence ID" value="AED95542.1"/>
    <property type="molecule type" value="Genomic_DNA"/>
</dbReference>
<dbReference type="EMBL" id="CP002688">
    <property type="protein sequence ID" value="AED95543.1"/>
    <property type="molecule type" value="Genomic_DNA"/>
</dbReference>
<dbReference type="EMBL" id="CP002688">
    <property type="protein sequence ID" value="ANM70148.1"/>
    <property type="molecule type" value="Genomic_DNA"/>
</dbReference>
<dbReference type="EMBL" id="AY063951">
    <property type="protein sequence ID" value="AAL36307.1"/>
    <property type="molecule type" value="mRNA"/>
</dbReference>
<dbReference type="EMBL" id="AY096717">
    <property type="protein sequence ID" value="AAM20351.1"/>
    <property type="molecule type" value="mRNA"/>
</dbReference>
<dbReference type="SMR" id="Q9FGJ4"/>
<dbReference type="FunCoup" id="Q9FGJ4">
    <property type="interactions" value="37"/>
</dbReference>
<dbReference type="STRING" id="3702.Q9FGJ4"/>
<dbReference type="PaxDb" id="3702-AT5G47630.2"/>
<dbReference type="ProteomicsDB" id="244378"/>
<dbReference type="EnsemblPlants" id="AT5G47630.1">
    <property type="protein sequence ID" value="AT5G47630.1"/>
    <property type="gene ID" value="AT5G47630"/>
</dbReference>
<dbReference type="EnsemblPlants" id="AT5G47630.2">
    <property type="protein sequence ID" value="AT5G47630.2"/>
    <property type="gene ID" value="AT5G47630"/>
</dbReference>
<dbReference type="EnsemblPlants" id="AT5G47630.3">
    <property type="protein sequence ID" value="AT5G47630.3"/>
    <property type="gene ID" value="AT5G47630"/>
</dbReference>
<dbReference type="GeneID" id="834813"/>
<dbReference type="Gramene" id="AT5G47630.1">
    <property type="protein sequence ID" value="AT5G47630.1"/>
    <property type="gene ID" value="AT5G47630"/>
</dbReference>
<dbReference type="Gramene" id="AT5G47630.2">
    <property type="protein sequence ID" value="AT5G47630.2"/>
    <property type="gene ID" value="AT5G47630"/>
</dbReference>
<dbReference type="Gramene" id="AT5G47630.3">
    <property type="protein sequence ID" value="AT5G47630.3"/>
    <property type="gene ID" value="AT5G47630"/>
</dbReference>
<dbReference type="KEGG" id="ath:AT5G47630"/>
<dbReference type="Araport" id="AT5G47630"/>
<dbReference type="TAIR" id="AT5G47630">
    <property type="gene designation" value="MTACP3"/>
</dbReference>
<dbReference type="eggNOG" id="KOG1748">
    <property type="taxonomic scope" value="Eukaryota"/>
</dbReference>
<dbReference type="HOGENOM" id="CLU_108696_0_3_1"/>
<dbReference type="InParanoid" id="Q9FGJ4"/>
<dbReference type="OMA" id="FISKMNF"/>
<dbReference type="PhylomeDB" id="Q9FGJ4"/>
<dbReference type="UniPathway" id="UPA00094"/>
<dbReference type="PRO" id="PR:Q9FGJ4"/>
<dbReference type="Proteomes" id="UP000006548">
    <property type="component" value="Chromosome 5"/>
</dbReference>
<dbReference type="ExpressionAtlas" id="Q9FGJ4">
    <property type="expression patterns" value="baseline and differential"/>
</dbReference>
<dbReference type="GO" id="GO:0005739">
    <property type="term" value="C:mitochondrion"/>
    <property type="evidence" value="ECO:0000314"/>
    <property type="project" value="TAIR"/>
</dbReference>
<dbReference type="GO" id="GO:0000036">
    <property type="term" value="F:acyl carrier activity"/>
    <property type="evidence" value="ECO:0000315"/>
    <property type="project" value="TAIR"/>
</dbReference>
<dbReference type="FunFam" id="1.10.1200.10:FF:000003">
    <property type="entry name" value="Acyl carrier protein"/>
    <property type="match status" value="1"/>
</dbReference>
<dbReference type="Gene3D" id="1.10.1200.10">
    <property type="entry name" value="ACP-like"/>
    <property type="match status" value="1"/>
</dbReference>
<dbReference type="HAMAP" id="MF_01217">
    <property type="entry name" value="Acyl_carrier"/>
    <property type="match status" value="1"/>
</dbReference>
<dbReference type="InterPro" id="IPR003231">
    <property type="entry name" value="ACP"/>
</dbReference>
<dbReference type="InterPro" id="IPR036736">
    <property type="entry name" value="ACP-like_sf"/>
</dbReference>
<dbReference type="InterPro" id="IPR009081">
    <property type="entry name" value="PP-bd_ACP"/>
</dbReference>
<dbReference type="NCBIfam" id="TIGR00517">
    <property type="entry name" value="acyl_carrier"/>
    <property type="match status" value="1"/>
</dbReference>
<dbReference type="NCBIfam" id="NF002148">
    <property type="entry name" value="PRK00982.1-2"/>
    <property type="match status" value="1"/>
</dbReference>
<dbReference type="PANTHER" id="PTHR20863">
    <property type="entry name" value="ACYL CARRIER PROTEIN"/>
    <property type="match status" value="1"/>
</dbReference>
<dbReference type="PANTHER" id="PTHR20863:SF60">
    <property type="entry name" value="ACYL CARRIER PROTEIN 3, MITOCHONDRIAL"/>
    <property type="match status" value="1"/>
</dbReference>
<dbReference type="Pfam" id="PF00550">
    <property type="entry name" value="PP-binding"/>
    <property type="match status" value="1"/>
</dbReference>
<dbReference type="SUPFAM" id="SSF47336">
    <property type="entry name" value="ACP-like"/>
    <property type="match status" value="1"/>
</dbReference>
<dbReference type="PROSITE" id="PS50075">
    <property type="entry name" value="CARRIER"/>
    <property type="match status" value="1"/>
</dbReference>
<feature type="transit peptide" description="Mitochondrion" evidence="3">
    <location>
        <begin position="1"/>
        <end position="39"/>
    </location>
</feature>
<feature type="chain" id="PRO_0000410993" description="Acyl carrier protein 3, mitochondrial">
    <location>
        <begin position="40"/>
        <end position="131"/>
    </location>
</feature>
<feature type="domain" description="Carrier" evidence="2">
    <location>
        <begin position="49"/>
        <end position="124"/>
    </location>
</feature>
<feature type="modified residue" description="O-(pantetheine 4'-phosphoryl)serine" evidence="2">
    <location>
        <position position="84"/>
    </location>
</feature>
<organism>
    <name type="scientific">Arabidopsis thaliana</name>
    <name type="common">Mouse-ear cress</name>
    <dbReference type="NCBI Taxonomy" id="3702"/>
    <lineage>
        <taxon>Eukaryota</taxon>
        <taxon>Viridiplantae</taxon>
        <taxon>Streptophyta</taxon>
        <taxon>Embryophyta</taxon>
        <taxon>Tracheophyta</taxon>
        <taxon>Spermatophyta</taxon>
        <taxon>Magnoliopsida</taxon>
        <taxon>eudicotyledons</taxon>
        <taxon>Gunneridae</taxon>
        <taxon>Pentapetalae</taxon>
        <taxon>rosids</taxon>
        <taxon>malvids</taxon>
        <taxon>Brassicales</taxon>
        <taxon>Brassicaceae</taxon>
        <taxon>Camelineae</taxon>
        <taxon>Arabidopsis</taxon>
    </lineage>
</organism>
<gene>
    <name type="primary">MTACP2</name>
    <name type="ordered locus">At5g47630</name>
    <name type="ORF">MNJ7.22</name>
</gene>
<proteinExistence type="evidence at protein level"/>
<protein>
    <recommendedName>
        <fullName>Acyl carrier protein 3, mitochondrial</fullName>
    </recommendedName>
    <alternativeName>
        <fullName>MtACP-3</fullName>
        <shortName>ACP</shortName>
    </alternativeName>
    <alternativeName>
        <fullName>NADH-ubiquinone oxidoreductase 9.6 kDa subunit</fullName>
    </alternativeName>
</protein>
<keyword id="KW-0249">Electron transport</keyword>
<keyword id="KW-0275">Fatty acid biosynthesis</keyword>
<keyword id="KW-0276">Fatty acid metabolism</keyword>
<keyword id="KW-0444">Lipid biosynthesis</keyword>
<keyword id="KW-0443">Lipid metabolism</keyword>
<keyword id="KW-0496">Mitochondrion</keyword>
<keyword id="KW-0596">Phosphopantetheine</keyword>
<keyword id="KW-0597">Phosphoprotein</keyword>
<keyword id="KW-1185">Reference proteome</keyword>
<keyword id="KW-0679">Respiratory chain</keyword>
<keyword id="KW-0809">Transit peptide</keyword>
<keyword id="KW-0813">Transport</keyword>
<evidence type="ECO:0000250" key="1"/>
<evidence type="ECO:0000255" key="2">
    <source>
        <dbReference type="PROSITE-ProRule" id="PRU00258"/>
    </source>
</evidence>
<evidence type="ECO:0000269" key="3">
    <source>
    </source>
</evidence>
<evidence type="ECO:0000305" key="4"/>
<evidence type="ECO:0000305" key="5">
    <source>
    </source>
</evidence>
<accession>Q9FGJ4</accession>
<reference key="1">
    <citation type="submission" date="1999-04" db="EMBL/GenBank/DDBJ databases">
        <title>Structural analysis of Arabidopsis thaliana chromosome 5. XI.</title>
        <authorList>
            <person name="Kaneko T."/>
            <person name="Katoh T."/>
            <person name="Asamizu E."/>
            <person name="Sato S."/>
            <person name="Nakamura Y."/>
            <person name="Kotani H."/>
            <person name="Tabata S."/>
        </authorList>
    </citation>
    <scope>NUCLEOTIDE SEQUENCE [LARGE SCALE GENOMIC DNA]</scope>
    <source>
        <strain>cv. Columbia</strain>
    </source>
</reference>
<reference key="2">
    <citation type="journal article" date="2017" name="Plant J.">
        <title>Araport11: a complete reannotation of the Arabidopsis thaliana reference genome.</title>
        <authorList>
            <person name="Cheng C.Y."/>
            <person name="Krishnakumar V."/>
            <person name="Chan A.P."/>
            <person name="Thibaud-Nissen F."/>
            <person name="Schobel S."/>
            <person name="Town C.D."/>
        </authorList>
    </citation>
    <scope>GENOME REANNOTATION</scope>
    <source>
        <strain>cv. Columbia</strain>
    </source>
</reference>
<reference key="3">
    <citation type="journal article" date="2003" name="Science">
        <title>Empirical analysis of transcriptional activity in the Arabidopsis genome.</title>
        <authorList>
            <person name="Yamada K."/>
            <person name="Lim J."/>
            <person name="Dale J.M."/>
            <person name="Chen H."/>
            <person name="Shinn P."/>
            <person name="Palm C.J."/>
            <person name="Southwick A.M."/>
            <person name="Wu H.C."/>
            <person name="Kim C.J."/>
            <person name="Nguyen M."/>
            <person name="Pham P.K."/>
            <person name="Cheuk R.F."/>
            <person name="Karlin-Newmann G."/>
            <person name="Liu S.X."/>
            <person name="Lam B."/>
            <person name="Sakano H."/>
            <person name="Wu T."/>
            <person name="Yu G."/>
            <person name="Miranda M."/>
            <person name="Quach H.L."/>
            <person name="Tripp M."/>
            <person name="Chang C.H."/>
            <person name="Lee J.M."/>
            <person name="Toriumi M.J."/>
            <person name="Chan M.M."/>
            <person name="Tang C.C."/>
            <person name="Onodera C.S."/>
            <person name="Deng J.M."/>
            <person name="Akiyama K."/>
            <person name="Ansari Y."/>
            <person name="Arakawa T."/>
            <person name="Banh J."/>
            <person name="Banno F."/>
            <person name="Bowser L."/>
            <person name="Brooks S.Y."/>
            <person name="Carninci P."/>
            <person name="Chao Q."/>
            <person name="Choy N."/>
            <person name="Enju A."/>
            <person name="Goldsmith A.D."/>
            <person name="Gurjal M."/>
            <person name="Hansen N.F."/>
            <person name="Hayashizaki Y."/>
            <person name="Johnson-Hopson C."/>
            <person name="Hsuan V.W."/>
            <person name="Iida K."/>
            <person name="Karnes M."/>
            <person name="Khan S."/>
            <person name="Koesema E."/>
            <person name="Ishida J."/>
            <person name="Jiang P.X."/>
            <person name="Jones T."/>
            <person name="Kawai J."/>
            <person name="Kamiya A."/>
            <person name="Meyers C."/>
            <person name="Nakajima M."/>
            <person name="Narusaka M."/>
            <person name="Seki M."/>
            <person name="Sakurai T."/>
            <person name="Satou M."/>
            <person name="Tamse R."/>
            <person name="Vaysberg M."/>
            <person name="Wallender E.K."/>
            <person name="Wong C."/>
            <person name="Yamamura Y."/>
            <person name="Yuan S."/>
            <person name="Shinozaki K."/>
            <person name="Davis R.W."/>
            <person name="Theologis A."/>
            <person name="Ecker J.R."/>
        </authorList>
    </citation>
    <scope>NUCLEOTIDE SEQUENCE [LARGE SCALE MRNA]</scope>
    <source>
        <strain>cv. Columbia</strain>
    </source>
</reference>
<reference key="4">
    <citation type="journal article" date="2015" name="J. Exp. Bot.">
        <title>Identification of cleavage sites and substrate proteins for two mitochondrial intermediate peptidases in Arabidopsis thaliana.</title>
        <authorList>
            <person name="Carrie C."/>
            <person name="Venne A.S."/>
            <person name="Zahedi R.P."/>
            <person name="Soll J."/>
        </authorList>
    </citation>
    <scope>IDENTIFICATION BY MASS SPECTROMETRY</scope>
    <scope>CLEAVAGE OF TRANSIT PEPTIDE AFTER THR-39</scope>
</reference>
<comment type="function">
    <text evidence="1">Carrier of the growing fatty acid chain in fatty acid biosynthesis (By similarity). May be involved in the synthesis of short and medium chain fatty acids. Accessory and non-catalytic subunit of the mitochondrial membrane respiratory chain NADH dehydrogenase (Complex I), which functions in the transfer of electrons from NADH to the respiratory chain (By similarity).</text>
</comment>
<comment type="pathway">
    <text>Lipid metabolism; fatty acid biosynthesis.</text>
</comment>
<comment type="subunit">
    <text>Complex I is composed of at least 49 different subunits.</text>
</comment>
<comment type="subcellular location">
    <subcellularLocation>
        <location evidence="5">Mitochondrion</location>
    </subcellularLocation>
</comment>
<comment type="PTM">
    <text evidence="4">4'-phosphopantetheine is transferred from CoA to a specific serine of the apo-ACP-like protein.</text>
</comment>
<comment type="similarity">
    <text evidence="4">Belongs to the acyl carrier protein (ACP) family.</text>
</comment>
<sequence>MHCIRSSILQHLRLRVSVRPTSLLQNENGFKSIGIFNFTSEAAADGGQDQILSRVIELVKKYDKTNTSEVTERADFQKDLSLDSLDKTELVMAIEEEFSIEIPDEKADKLTCCGDVATYILSETPTKASES</sequence>